<reference key="1">
    <citation type="submission" date="2005-03" db="EMBL/GenBank/DDBJ databases">
        <title>Brevibacillus brevis strain 47, complete genome.</title>
        <authorList>
            <person name="Hosoyama A."/>
            <person name="Yamada R."/>
            <person name="Hongo Y."/>
            <person name="Terui Y."/>
            <person name="Ankai A."/>
            <person name="Masuyama W."/>
            <person name="Sekiguchi M."/>
            <person name="Takeda T."/>
            <person name="Asano K."/>
            <person name="Ohji S."/>
            <person name="Ichikawa N."/>
            <person name="Narita S."/>
            <person name="Aoki N."/>
            <person name="Miura H."/>
            <person name="Matsushita S."/>
            <person name="Sekigawa T."/>
            <person name="Yamagata H."/>
            <person name="Yoshikawa H."/>
            <person name="Udaka S."/>
            <person name="Tanikawa S."/>
            <person name="Fujita N."/>
        </authorList>
    </citation>
    <scope>NUCLEOTIDE SEQUENCE [LARGE SCALE GENOMIC DNA]</scope>
    <source>
        <strain>47 / JCM 6285 / NBRC 100599</strain>
    </source>
</reference>
<comment type="function">
    <text evidence="1">May play a role in DNA repair. It seems to be involved in an RecBC-independent recombinational process of DNA repair. It may act with RecF and RecO.</text>
</comment>
<comment type="similarity">
    <text evidence="1">Belongs to the RecR family.</text>
</comment>
<sequence>MFYPEPVSKLIDGFMKLPGIGPKTAGRLAFFVLNMKEDDVLDLAKALVNAKRQLHYCSVCNNITDLDPCHICRDKRRDGSIICVVQEPRDVVAMEKTREFEGYYHVLHGAISPMDGIGPEDIRIPDLLKRLGDEQVKEVILATNPNIEGEATAMYISRLIKPFGIRVTRIAHGLPVGGDLEYADEVTLTKALEGRRDL</sequence>
<keyword id="KW-0227">DNA damage</keyword>
<keyword id="KW-0233">DNA recombination</keyword>
<keyword id="KW-0234">DNA repair</keyword>
<keyword id="KW-0479">Metal-binding</keyword>
<keyword id="KW-1185">Reference proteome</keyword>
<keyword id="KW-0862">Zinc</keyword>
<keyword id="KW-0863">Zinc-finger</keyword>
<accession>C0ZHA2</accession>
<organism>
    <name type="scientific">Brevibacillus brevis (strain 47 / JCM 6285 / NBRC 100599)</name>
    <dbReference type="NCBI Taxonomy" id="358681"/>
    <lineage>
        <taxon>Bacteria</taxon>
        <taxon>Bacillati</taxon>
        <taxon>Bacillota</taxon>
        <taxon>Bacilli</taxon>
        <taxon>Bacillales</taxon>
        <taxon>Paenibacillaceae</taxon>
        <taxon>Brevibacillus</taxon>
    </lineage>
</organism>
<protein>
    <recommendedName>
        <fullName evidence="1">Recombination protein RecR</fullName>
    </recommendedName>
</protein>
<gene>
    <name evidence="1" type="primary">recR</name>
    <name type="ordered locus">BBR47_00660</name>
</gene>
<dbReference type="EMBL" id="AP008955">
    <property type="protein sequence ID" value="BAH41043.1"/>
    <property type="molecule type" value="Genomic_DNA"/>
</dbReference>
<dbReference type="RefSeq" id="WP_012683846.1">
    <property type="nucleotide sequence ID" value="NC_012491.1"/>
</dbReference>
<dbReference type="SMR" id="C0ZHA2"/>
<dbReference type="STRING" id="358681.BBR47_00660"/>
<dbReference type="GeneID" id="61030320"/>
<dbReference type="KEGG" id="bbe:BBR47_00660"/>
<dbReference type="eggNOG" id="COG0353">
    <property type="taxonomic scope" value="Bacteria"/>
</dbReference>
<dbReference type="HOGENOM" id="CLU_060739_1_0_9"/>
<dbReference type="Proteomes" id="UP000001877">
    <property type="component" value="Chromosome"/>
</dbReference>
<dbReference type="GO" id="GO:0003677">
    <property type="term" value="F:DNA binding"/>
    <property type="evidence" value="ECO:0007669"/>
    <property type="project" value="UniProtKB-UniRule"/>
</dbReference>
<dbReference type="GO" id="GO:0008270">
    <property type="term" value="F:zinc ion binding"/>
    <property type="evidence" value="ECO:0007669"/>
    <property type="project" value="UniProtKB-KW"/>
</dbReference>
<dbReference type="GO" id="GO:0006310">
    <property type="term" value="P:DNA recombination"/>
    <property type="evidence" value="ECO:0007669"/>
    <property type="project" value="UniProtKB-UniRule"/>
</dbReference>
<dbReference type="GO" id="GO:0006281">
    <property type="term" value="P:DNA repair"/>
    <property type="evidence" value="ECO:0007669"/>
    <property type="project" value="UniProtKB-UniRule"/>
</dbReference>
<dbReference type="CDD" id="cd01025">
    <property type="entry name" value="TOPRIM_recR"/>
    <property type="match status" value="1"/>
</dbReference>
<dbReference type="Gene3D" id="3.30.60.80">
    <property type="match status" value="1"/>
</dbReference>
<dbReference type="Gene3D" id="3.40.1360.10">
    <property type="match status" value="1"/>
</dbReference>
<dbReference type="Gene3D" id="6.10.250.240">
    <property type="match status" value="1"/>
</dbReference>
<dbReference type="Gene3D" id="1.10.8.420">
    <property type="entry name" value="RecR Domain 1"/>
    <property type="match status" value="1"/>
</dbReference>
<dbReference type="HAMAP" id="MF_00017">
    <property type="entry name" value="RecR"/>
    <property type="match status" value="1"/>
</dbReference>
<dbReference type="InterPro" id="IPR000093">
    <property type="entry name" value="DNA_Rcmb_RecR"/>
</dbReference>
<dbReference type="InterPro" id="IPR023627">
    <property type="entry name" value="Rcmb_RecR"/>
</dbReference>
<dbReference type="InterPro" id="IPR015967">
    <property type="entry name" value="Rcmb_RecR_Znf"/>
</dbReference>
<dbReference type="InterPro" id="IPR006171">
    <property type="entry name" value="TOPRIM_dom"/>
</dbReference>
<dbReference type="InterPro" id="IPR034137">
    <property type="entry name" value="TOPRIM_RecR"/>
</dbReference>
<dbReference type="NCBIfam" id="TIGR00615">
    <property type="entry name" value="recR"/>
    <property type="match status" value="1"/>
</dbReference>
<dbReference type="PANTHER" id="PTHR30446">
    <property type="entry name" value="RECOMBINATION PROTEIN RECR"/>
    <property type="match status" value="1"/>
</dbReference>
<dbReference type="PANTHER" id="PTHR30446:SF0">
    <property type="entry name" value="RECOMBINATION PROTEIN RECR"/>
    <property type="match status" value="1"/>
</dbReference>
<dbReference type="Pfam" id="PF21175">
    <property type="entry name" value="RecR_C"/>
    <property type="match status" value="1"/>
</dbReference>
<dbReference type="Pfam" id="PF21176">
    <property type="entry name" value="RecR_HhH"/>
    <property type="match status" value="1"/>
</dbReference>
<dbReference type="Pfam" id="PF02132">
    <property type="entry name" value="RecR_ZnF"/>
    <property type="match status" value="1"/>
</dbReference>
<dbReference type="Pfam" id="PF13662">
    <property type="entry name" value="Toprim_4"/>
    <property type="match status" value="1"/>
</dbReference>
<dbReference type="SMART" id="SM00493">
    <property type="entry name" value="TOPRIM"/>
    <property type="match status" value="1"/>
</dbReference>
<dbReference type="SUPFAM" id="SSF111304">
    <property type="entry name" value="Recombination protein RecR"/>
    <property type="match status" value="1"/>
</dbReference>
<dbReference type="PROSITE" id="PS01300">
    <property type="entry name" value="RECR"/>
    <property type="match status" value="1"/>
</dbReference>
<dbReference type="PROSITE" id="PS50880">
    <property type="entry name" value="TOPRIM"/>
    <property type="match status" value="1"/>
</dbReference>
<name>RECR_BREBN</name>
<feature type="chain" id="PRO_1000195368" description="Recombination protein RecR">
    <location>
        <begin position="1"/>
        <end position="198"/>
    </location>
</feature>
<feature type="domain" description="Toprim" evidence="1">
    <location>
        <begin position="80"/>
        <end position="175"/>
    </location>
</feature>
<feature type="zinc finger region" description="C4-type" evidence="1">
    <location>
        <begin position="57"/>
        <end position="72"/>
    </location>
</feature>
<proteinExistence type="inferred from homology"/>
<evidence type="ECO:0000255" key="1">
    <source>
        <dbReference type="HAMAP-Rule" id="MF_00017"/>
    </source>
</evidence>